<proteinExistence type="inferred from homology"/>
<geneLocation type="plasmid">
    <name>pSymA</name>
    <name>megaplasmid 1</name>
</geneLocation>
<sequence>MSYVQSIPPHDIEAHLAEHDNKSILRFITCGSVDDGKSTLIGRLLYDAKLVFEDQLANLGRVGSPGAANGKEIDLALLLDGLEAEREQGITIDVAYRYFATSKRKFIVADTPGHEEYTRNMVTGASTADLAIILIDSRQGILQQTRRHSYIASLLGIRHVVLAVNKIDLVDFKQQVYEEIVADYMAFAKELGFASIRPIPISARDGDNVISASANTPWYRGAALLEYLETVELDPTDQAKPFRFPVQMVMRPNADFRGYAGQISCGRISVGDPVVVAKTGQRTSVKAIVTYDGELATAGEGEAVTLVLSDEVDASRGNMLVAPGARPFVADQFQAHVIWFDANPMMPGRSYILRTETDSVSATVTTLKHQVNINSFIREAAKSLQMNEVGVCNISTQAPIAFDAYNDNRATGNFIIVDRVTNATVGAGLIDFPLRRADNVHWHALEVNKSARSAMKNQLPAVLWFTGLSGSGKSTIANELDRILHAQGKHTYLLDGDNVRHGLNRDLGFTEEDRVENIRRVAEVAKLMADAGLIVLVSFISPFRDERRMARELMEEGEFIEIFVDTPLDECARRDPKGLYEKALAGKIANFTGVSSCYEAPENPELHIRTVGHQPNDLALAIEEFLDRRIGGQMTPLQRPT</sequence>
<evidence type="ECO:0000250" key="1"/>
<evidence type="ECO:0000255" key="2"/>
<evidence type="ECO:0000305" key="3"/>
<protein>
    <recommendedName>
        <fullName>Bifunctional enzyme NodQ</fullName>
    </recommendedName>
    <alternativeName>
        <fullName>Nodulation protein Q</fullName>
    </alternativeName>
    <domain>
        <recommendedName>
            <fullName>Sulfate adenylyltransferase subunit 1</fullName>
            <ecNumber>2.7.7.4</ecNumber>
        </recommendedName>
        <alternativeName>
            <fullName>ATP-sulfurylase large subunit</fullName>
        </alternativeName>
        <alternativeName>
            <fullName>Sulfate adenylate transferase</fullName>
            <shortName>SAT</shortName>
        </alternativeName>
    </domain>
    <domain>
        <recommendedName>
            <fullName>Adenylyl-sulfate kinase</fullName>
            <ecNumber>2.7.1.25</ecNumber>
        </recommendedName>
        <alternativeName>
            <fullName>APS kinase</fullName>
        </alternativeName>
        <alternativeName>
            <fullName>ATP adenosine-5'-phosphosulfate 3'-phosphotransferase</fullName>
        </alternativeName>
    </domain>
</protein>
<name>NODQ_RHIME</name>
<dbReference type="EC" id="2.7.7.4"/>
<dbReference type="EC" id="2.7.1.25"/>
<dbReference type="EMBL" id="X14809">
    <property type="protein sequence ID" value="CAA32914.1"/>
    <property type="molecule type" value="Genomic_DNA"/>
</dbReference>
<dbReference type="EMBL" id="M68858">
    <property type="protein sequence ID" value="AAA26343.1"/>
    <property type="molecule type" value="Genomic_DNA"/>
</dbReference>
<dbReference type="EMBL" id="AE006469">
    <property type="protein sequence ID" value="AAK65127.1"/>
    <property type="molecule type" value="Genomic_DNA"/>
</dbReference>
<dbReference type="PIR" id="E95320">
    <property type="entry name" value="E95320"/>
</dbReference>
<dbReference type="PIR" id="S14899">
    <property type="entry name" value="ZZZRNQ"/>
</dbReference>
<dbReference type="RefSeq" id="NP_435715.1">
    <property type="nucleotide sequence ID" value="NC_003037.1"/>
</dbReference>
<dbReference type="RefSeq" id="WP_010967450.1">
    <property type="nucleotide sequence ID" value="NC_003037.1"/>
</dbReference>
<dbReference type="SMR" id="P13442"/>
<dbReference type="EnsemblBacteria" id="AAK65127">
    <property type="protein sequence ID" value="AAK65127"/>
    <property type="gene ID" value="SMa0857"/>
</dbReference>
<dbReference type="KEGG" id="sme:SMa0857"/>
<dbReference type="PATRIC" id="fig|266834.11.peg.479"/>
<dbReference type="eggNOG" id="COG0529">
    <property type="taxonomic scope" value="Bacteria"/>
</dbReference>
<dbReference type="eggNOG" id="COG2895">
    <property type="taxonomic scope" value="Bacteria"/>
</dbReference>
<dbReference type="HOGENOM" id="CLU_007265_5_0_5"/>
<dbReference type="OrthoDB" id="9804504at2"/>
<dbReference type="Proteomes" id="UP000001976">
    <property type="component" value="Plasmid pSymA"/>
</dbReference>
<dbReference type="GO" id="GO:0004020">
    <property type="term" value="F:adenylylsulfate kinase activity"/>
    <property type="evidence" value="ECO:0007669"/>
    <property type="project" value="UniProtKB-UniRule"/>
</dbReference>
<dbReference type="GO" id="GO:0005524">
    <property type="term" value="F:ATP binding"/>
    <property type="evidence" value="ECO:0007669"/>
    <property type="project" value="UniProtKB-UniRule"/>
</dbReference>
<dbReference type="GO" id="GO:0005525">
    <property type="term" value="F:GTP binding"/>
    <property type="evidence" value="ECO:0007669"/>
    <property type="project" value="UniProtKB-UniRule"/>
</dbReference>
<dbReference type="GO" id="GO:0003924">
    <property type="term" value="F:GTPase activity"/>
    <property type="evidence" value="ECO:0007669"/>
    <property type="project" value="InterPro"/>
</dbReference>
<dbReference type="GO" id="GO:0004781">
    <property type="term" value="F:sulfate adenylyltransferase (ATP) activity"/>
    <property type="evidence" value="ECO:0007669"/>
    <property type="project" value="UniProtKB-UniRule"/>
</dbReference>
<dbReference type="GO" id="GO:0070814">
    <property type="term" value="P:hydrogen sulfide biosynthetic process"/>
    <property type="evidence" value="ECO:0007669"/>
    <property type="project" value="UniProtKB-UniRule"/>
</dbReference>
<dbReference type="GO" id="GO:0000103">
    <property type="term" value="P:sulfate assimilation"/>
    <property type="evidence" value="ECO:0007669"/>
    <property type="project" value="UniProtKB-UniRule"/>
</dbReference>
<dbReference type="CDD" id="cd02027">
    <property type="entry name" value="APSK"/>
    <property type="match status" value="1"/>
</dbReference>
<dbReference type="CDD" id="cd04166">
    <property type="entry name" value="CysN_ATPS"/>
    <property type="match status" value="1"/>
</dbReference>
<dbReference type="CDD" id="cd03695">
    <property type="entry name" value="CysN_NodQ_II"/>
    <property type="match status" value="1"/>
</dbReference>
<dbReference type="CDD" id="cd04095">
    <property type="entry name" value="CysN_NoDQ_III"/>
    <property type="match status" value="1"/>
</dbReference>
<dbReference type="FunFam" id="3.40.50.300:FF:000212">
    <property type="entry name" value="Adenylyl-sulfate kinase"/>
    <property type="match status" value="1"/>
</dbReference>
<dbReference type="FunFam" id="3.40.50.300:FF:000119">
    <property type="entry name" value="Sulfate adenylyltransferase subunit 1"/>
    <property type="match status" value="1"/>
</dbReference>
<dbReference type="Gene3D" id="3.40.50.300">
    <property type="entry name" value="P-loop containing nucleotide triphosphate hydrolases"/>
    <property type="match status" value="2"/>
</dbReference>
<dbReference type="Gene3D" id="2.40.30.10">
    <property type="entry name" value="Translation factors"/>
    <property type="match status" value="2"/>
</dbReference>
<dbReference type="HAMAP" id="MF_00065">
    <property type="entry name" value="Adenylyl_sulf_kinase"/>
    <property type="match status" value="1"/>
</dbReference>
<dbReference type="HAMAP" id="MF_00062">
    <property type="entry name" value="Sulf_adenylyltr_sub1"/>
    <property type="match status" value="1"/>
</dbReference>
<dbReference type="InterPro" id="IPR002891">
    <property type="entry name" value="APS_kinase"/>
</dbReference>
<dbReference type="InterPro" id="IPR041757">
    <property type="entry name" value="CysN_GTP-bd"/>
</dbReference>
<dbReference type="InterPro" id="IPR044138">
    <property type="entry name" value="CysN_II"/>
</dbReference>
<dbReference type="InterPro" id="IPR044139">
    <property type="entry name" value="CysN_NoDQ_III"/>
</dbReference>
<dbReference type="InterPro" id="IPR031157">
    <property type="entry name" value="G_TR_CS"/>
</dbReference>
<dbReference type="InterPro" id="IPR054696">
    <property type="entry name" value="GTP-eEF1A_C"/>
</dbReference>
<dbReference type="InterPro" id="IPR027417">
    <property type="entry name" value="P-loop_NTPase"/>
</dbReference>
<dbReference type="InterPro" id="IPR011779">
    <property type="entry name" value="SO4_adenylTrfase_lsu"/>
</dbReference>
<dbReference type="InterPro" id="IPR000795">
    <property type="entry name" value="T_Tr_GTP-bd_dom"/>
</dbReference>
<dbReference type="InterPro" id="IPR050100">
    <property type="entry name" value="TRAFAC_GTPase_members"/>
</dbReference>
<dbReference type="InterPro" id="IPR009000">
    <property type="entry name" value="Transl_B-barrel_sf"/>
</dbReference>
<dbReference type="InterPro" id="IPR009001">
    <property type="entry name" value="Transl_elong_EF1A/Init_IF2_C"/>
</dbReference>
<dbReference type="NCBIfam" id="TIGR00455">
    <property type="entry name" value="apsK"/>
    <property type="match status" value="1"/>
</dbReference>
<dbReference type="NCBIfam" id="TIGR02034">
    <property type="entry name" value="CysN"/>
    <property type="match status" value="1"/>
</dbReference>
<dbReference type="NCBIfam" id="NF003013">
    <property type="entry name" value="PRK03846.1"/>
    <property type="match status" value="1"/>
</dbReference>
<dbReference type="NCBIfam" id="NF003478">
    <property type="entry name" value="PRK05124.1"/>
    <property type="match status" value="1"/>
</dbReference>
<dbReference type="NCBIfam" id="NF004035">
    <property type="entry name" value="PRK05506.1"/>
    <property type="match status" value="1"/>
</dbReference>
<dbReference type="PANTHER" id="PTHR23115">
    <property type="entry name" value="TRANSLATION FACTOR"/>
    <property type="match status" value="1"/>
</dbReference>
<dbReference type="Pfam" id="PF01583">
    <property type="entry name" value="APS_kinase"/>
    <property type="match status" value="1"/>
</dbReference>
<dbReference type="Pfam" id="PF22594">
    <property type="entry name" value="GTP-eEF1A_C"/>
    <property type="match status" value="1"/>
</dbReference>
<dbReference type="Pfam" id="PF00009">
    <property type="entry name" value="GTP_EFTU"/>
    <property type="match status" value="1"/>
</dbReference>
<dbReference type="PRINTS" id="PR00315">
    <property type="entry name" value="ELONGATNFCT"/>
</dbReference>
<dbReference type="SUPFAM" id="SSF50465">
    <property type="entry name" value="EF-Tu/eEF-1alpha/eIF2-gamma C-terminal domain"/>
    <property type="match status" value="1"/>
</dbReference>
<dbReference type="SUPFAM" id="SSF52540">
    <property type="entry name" value="P-loop containing nucleoside triphosphate hydrolases"/>
    <property type="match status" value="2"/>
</dbReference>
<dbReference type="SUPFAM" id="SSF50447">
    <property type="entry name" value="Translation proteins"/>
    <property type="match status" value="1"/>
</dbReference>
<dbReference type="PROSITE" id="PS00301">
    <property type="entry name" value="G_TR_1"/>
    <property type="match status" value="1"/>
</dbReference>
<dbReference type="PROSITE" id="PS51722">
    <property type="entry name" value="G_TR_2"/>
    <property type="match status" value="1"/>
</dbReference>
<reference key="1">
    <citation type="journal article" date="1989" name="Mol. Microbiol.">
        <title>The Rhizobium meliloti host range nodQ gene encodes a protein which shares homology with translation elongation and initiation factors.</title>
        <authorList>
            <person name="Cervantes E."/>
            <person name="Sharma S.B."/>
            <person name="Maillet F."/>
            <person name="Vasse J."/>
            <person name="Truchet G."/>
            <person name="Rosenberg C."/>
        </authorList>
    </citation>
    <scope>NUCLEOTIDE SEQUENCE [GENOMIC DNA]</scope>
    <source>
        <strain>RCR2011 / SU47</strain>
    </source>
</reference>
<reference key="2">
    <citation type="journal article" date="1989" name="Mol. Plant Microbe Interact.">
        <title>Nucleotide sequence and protein products of two new nodulation genes of Rhizobium meliloti, nodP and nodQ.</title>
        <authorList>
            <person name="Schwedock J."/>
            <person name="Long S.R."/>
        </authorList>
    </citation>
    <scope>NUCLEOTIDE SEQUENCE [GENOMIC DNA]</scope>
</reference>
<reference key="3">
    <citation type="journal article" date="2001" name="Proc. Natl. Acad. Sci. U.S.A.">
        <title>Nucleotide sequence and predicted functions of the entire Sinorhizobium meliloti pSymA megaplasmid.</title>
        <authorList>
            <person name="Barnett M.J."/>
            <person name="Fisher R.F."/>
            <person name="Jones T."/>
            <person name="Komp C."/>
            <person name="Abola A.P."/>
            <person name="Barloy-Hubler F."/>
            <person name="Bowser L."/>
            <person name="Capela D."/>
            <person name="Galibert F."/>
            <person name="Gouzy J."/>
            <person name="Gurjal M."/>
            <person name="Hong A."/>
            <person name="Huizar L."/>
            <person name="Hyman R.W."/>
            <person name="Kahn D."/>
            <person name="Kahn M.L."/>
            <person name="Kalman S."/>
            <person name="Keating D.H."/>
            <person name="Palm C."/>
            <person name="Peck M.C."/>
            <person name="Surzycki R."/>
            <person name="Wells D.H."/>
            <person name="Yeh K.-C."/>
            <person name="Davis R.W."/>
            <person name="Federspiel N.A."/>
            <person name="Long S.R."/>
        </authorList>
    </citation>
    <scope>NUCLEOTIDE SEQUENCE [LARGE SCALE GENOMIC DNA]</scope>
    <source>
        <strain>1021</strain>
    </source>
</reference>
<reference key="4">
    <citation type="journal article" date="2001" name="Science">
        <title>The composite genome of the legume symbiont Sinorhizobium meliloti.</title>
        <authorList>
            <person name="Galibert F."/>
            <person name="Finan T.M."/>
            <person name="Long S.R."/>
            <person name="Puehler A."/>
            <person name="Abola P."/>
            <person name="Ampe F."/>
            <person name="Barloy-Hubler F."/>
            <person name="Barnett M.J."/>
            <person name="Becker A."/>
            <person name="Boistard P."/>
            <person name="Bothe G."/>
            <person name="Boutry M."/>
            <person name="Bowser L."/>
            <person name="Buhrmester J."/>
            <person name="Cadieu E."/>
            <person name="Capela D."/>
            <person name="Chain P."/>
            <person name="Cowie A."/>
            <person name="Davis R.W."/>
            <person name="Dreano S."/>
            <person name="Federspiel N.A."/>
            <person name="Fisher R.F."/>
            <person name="Gloux S."/>
            <person name="Godrie T."/>
            <person name="Goffeau A."/>
            <person name="Golding B."/>
            <person name="Gouzy J."/>
            <person name="Gurjal M."/>
            <person name="Hernandez-Lucas I."/>
            <person name="Hong A."/>
            <person name="Huizar L."/>
            <person name="Hyman R.W."/>
            <person name="Jones T."/>
            <person name="Kahn D."/>
            <person name="Kahn M.L."/>
            <person name="Kalman S."/>
            <person name="Keating D.H."/>
            <person name="Kiss E."/>
            <person name="Komp C."/>
            <person name="Lelaure V."/>
            <person name="Masuy D."/>
            <person name="Palm C."/>
            <person name="Peck M.C."/>
            <person name="Pohl T.M."/>
            <person name="Portetelle D."/>
            <person name="Purnelle B."/>
            <person name="Ramsperger U."/>
            <person name="Surzycki R."/>
            <person name="Thebault P."/>
            <person name="Vandenbol M."/>
            <person name="Vorhoelter F.J."/>
            <person name="Weidner S."/>
            <person name="Wells D.H."/>
            <person name="Wong K."/>
            <person name="Yeh K.-C."/>
            <person name="Batut J."/>
        </authorList>
    </citation>
    <scope>NUCLEOTIDE SEQUENCE [LARGE SCALE GENOMIC DNA]</scope>
    <source>
        <strain>1021</strain>
    </source>
</reference>
<gene>
    <name type="primary">nodQ</name>
    <name type="ordered locus">RA0469</name>
    <name type="ORF">SMa0857</name>
</gene>
<keyword id="KW-0067">ATP-binding</keyword>
<keyword id="KW-0342">GTP-binding</keyword>
<keyword id="KW-0418">Kinase</keyword>
<keyword id="KW-0511">Multifunctional enzyme</keyword>
<keyword id="KW-0536">Nodulation</keyword>
<keyword id="KW-0547">Nucleotide-binding</keyword>
<keyword id="KW-0548">Nucleotidyltransferase</keyword>
<keyword id="KW-0614">Plasmid</keyword>
<keyword id="KW-1185">Reference proteome</keyword>
<keyword id="KW-0808">Transferase</keyword>
<organism>
    <name type="scientific">Rhizobium meliloti (strain 1021)</name>
    <name type="common">Ensifer meliloti</name>
    <name type="synonym">Sinorhizobium meliloti</name>
    <dbReference type="NCBI Taxonomy" id="266834"/>
    <lineage>
        <taxon>Bacteria</taxon>
        <taxon>Pseudomonadati</taxon>
        <taxon>Pseudomonadota</taxon>
        <taxon>Alphaproteobacteria</taxon>
        <taxon>Hyphomicrobiales</taxon>
        <taxon>Rhizobiaceae</taxon>
        <taxon>Sinorhizobium/Ensifer group</taxon>
        <taxon>Sinorhizobium</taxon>
    </lineage>
</organism>
<accession>P13442</accession>
<feature type="chain" id="PRO_0000091542" description="Bifunctional enzyme NodQ">
    <location>
        <begin position="1"/>
        <end position="641"/>
    </location>
</feature>
<feature type="domain" description="tr-type G">
    <location>
        <begin position="22"/>
        <end position="236"/>
    </location>
</feature>
<feature type="region of interest" description="Sulfate adenylyltransferase">
    <location>
        <begin position="1"/>
        <end position="458"/>
    </location>
</feature>
<feature type="region of interest" description="G1" evidence="1">
    <location>
        <begin position="31"/>
        <end position="38"/>
    </location>
</feature>
<feature type="region of interest" description="G2" evidence="1">
    <location>
        <begin position="89"/>
        <end position="93"/>
    </location>
</feature>
<feature type="region of interest" description="G3" evidence="1">
    <location>
        <begin position="110"/>
        <end position="113"/>
    </location>
</feature>
<feature type="region of interest" description="G4" evidence="1">
    <location>
        <begin position="165"/>
        <end position="168"/>
    </location>
</feature>
<feature type="region of interest" description="G5" evidence="1">
    <location>
        <begin position="202"/>
        <end position="204"/>
    </location>
</feature>
<feature type="region of interest" description="Adenylyl-sulfate kinase">
    <location>
        <begin position="459"/>
        <end position="641"/>
    </location>
</feature>
<feature type="active site" description="Phosphoserine intermediate" evidence="1">
    <location>
        <position position="541"/>
    </location>
</feature>
<feature type="binding site" evidence="1">
    <location>
        <begin position="31"/>
        <end position="38"/>
    </location>
    <ligand>
        <name>GTP</name>
        <dbReference type="ChEBI" id="CHEBI:37565"/>
    </ligand>
</feature>
<feature type="binding site" evidence="1">
    <location>
        <begin position="110"/>
        <end position="114"/>
    </location>
    <ligand>
        <name>GTP</name>
        <dbReference type="ChEBI" id="CHEBI:37565"/>
    </ligand>
</feature>
<feature type="binding site" evidence="1">
    <location>
        <begin position="165"/>
        <end position="168"/>
    </location>
    <ligand>
        <name>GTP</name>
        <dbReference type="ChEBI" id="CHEBI:37565"/>
    </ligand>
</feature>
<feature type="binding site" evidence="2">
    <location>
        <begin position="467"/>
        <end position="474"/>
    </location>
    <ligand>
        <name>ATP</name>
        <dbReference type="ChEBI" id="CHEBI:30616"/>
    </ligand>
</feature>
<comment type="function">
    <text evidence="1">Proposed to provide activated sulfate for transfer to Nod factor. ATP sulfurylase may be the GTPase, regulating ATP sulfurylase activity (By similarity).</text>
</comment>
<comment type="function">
    <text evidence="1">APS kinase catalyzes the synthesis of activated sulfate.</text>
</comment>
<comment type="catalytic activity">
    <reaction>
        <text>sulfate + ATP + H(+) = adenosine 5'-phosphosulfate + diphosphate</text>
        <dbReference type="Rhea" id="RHEA:18133"/>
        <dbReference type="ChEBI" id="CHEBI:15378"/>
        <dbReference type="ChEBI" id="CHEBI:16189"/>
        <dbReference type="ChEBI" id="CHEBI:30616"/>
        <dbReference type="ChEBI" id="CHEBI:33019"/>
        <dbReference type="ChEBI" id="CHEBI:58243"/>
        <dbReference type="EC" id="2.7.7.4"/>
    </reaction>
</comment>
<comment type="catalytic activity">
    <reaction>
        <text>adenosine 5'-phosphosulfate + ATP = 3'-phosphoadenylyl sulfate + ADP + H(+)</text>
        <dbReference type="Rhea" id="RHEA:24152"/>
        <dbReference type="ChEBI" id="CHEBI:15378"/>
        <dbReference type="ChEBI" id="CHEBI:30616"/>
        <dbReference type="ChEBI" id="CHEBI:58243"/>
        <dbReference type="ChEBI" id="CHEBI:58339"/>
        <dbReference type="ChEBI" id="CHEBI:456216"/>
        <dbReference type="EC" id="2.7.1.25"/>
    </reaction>
</comment>
<comment type="subunit">
    <text evidence="3">Sulfate-activating enzymes, NodP and NodQ, may be physically associated.</text>
</comment>
<comment type="similarity">
    <text evidence="3">In the C-terminal section; belongs to the APS kinase family.</text>
</comment>
<comment type="similarity">
    <text evidence="3">In the N-terminal section; belongs to the TRAFAC class translation factor GTPase superfamily. Classic translation factor GTPase family. CysN/NodQ subfamily.</text>
</comment>